<sequence length="71" mass="8074">MGVGLHGDHVGGELNSANAFTETLFKMDYNNPEHKEMMDLEGLKRWIARRKSLKLPSTRANIKISDKKLPH</sequence>
<organism>
    <name type="scientific">Haemophilus influenzae (strain ATCC 51907 / DSM 11121 / KW20 / Rd)</name>
    <dbReference type="NCBI Taxonomy" id="71421"/>
    <lineage>
        <taxon>Bacteria</taxon>
        <taxon>Pseudomonadati</taxon>
        <taxon>Pseudomonadota</taxon>
        <taxon>Gammaproteobacteria</taxon>
        <taxon>Pasteurellales</taxon>
        <taxon>Pasteurellaceae</taxon>
        <taxon>Haemophilus</taxon>
    </lineage>
</organism>
<feature type="signal peptide" evidence="1">
    <location>
        <begin position="1"/>
        <end position="21"/>
    </location>
</feature>
<feature type="chain" id="PRO_0000013949" description="Uncharacterized protein HI_0083">
    <location>
        <begin position="22"/>
        <end position="71"/>
    </location>
</feature>
<proteinExistence type="inferred from homology"/>
<gene>
    <name type="ordered locus">HI_0083</name>
</gene>
<accession>P43938</accession>
<evidence type="ECO:0000255" key="1"/>
<name>Y083_HAEIN</name>
<reference key="1">
    <citation type="journal article" date="1995" name="Science">
        <title>Whole-genome random sequencing and assembly of Haemophilus influenzae Rd.</title>
        <authorList>
            <person name="Fleischmann R.D."/>
            <person name="Adams M.D."/>
            <person name="White O."/>
            <person name="Clayton R.A."/>
            <person name="Kirkness E.F."/>
            <person name="Kerlavage A.R."/>
            <person name="Bult C.J."/>
            <person name="Tomb J.-F."/>
            <person name="Dougherty B.A."/>
            <person name="Merrick J.M."/>
            <person name="McKenney K."/>
            <person name="Sutton G.G."/>
            <person name="FitzHugh W."/>
            <person name="Fields C.A."/>
            <person name="Gocayne J.D."/>
            <person name="Scott J.D."/>
            <person name="Shirley R."/>
            <person name="Liu L.-I."/>
            <person name="Glodek A."/>
            <person name="Kelley J.M."/>
            <person name="Weidman J.F."/>
            <person name="Phillips C.A."/>
            <person name="Spriggs T."/>
            <person name="Hedblom E."/>
            <person name="Cotton M.D."/>
            <person name="Utterback T.R."/>
            <person name="Hanna M.C."/>
            <person name="Nguyen D.T."/>
            <person name="Saudek D.M."/>
            <person name="Brandon R.C."/>
            <person name="Fine L.D."/>
            <person name="Fritchman J.L."/>
            <person name="Fuhrmann J.L."/>
            <person name="Geoghagen N.S.M."/>
            <person name="Gnehm C.L."/>
            <person name="McDonald L.A."/>
            <person name="Small K.V."/>
            <person name="Fraser C.M."/>
            <person name="Smith H.O."/>
            <person name="Venter J.C."/>
        </authorList>
    </citation>
    <scope>NUCLEOTIDE SEQUENCE [LARGE SCALE GENOMIC DNA]</scope>
    <source>
        <strain>ATCC 51907 / DSM 11121 / KW20 / Rd</strain>
    </source>
</reference>
<keyword id="KW-1185">Reference proteome</keyword>
<keyword id="KW-0732">Signal</keyword>
<dbReference type="EMBL" id="L42023">
    <property type="protein sequence ID" value="AAC21762.1"/>
    <property type="molecule type" value="Genomic_DNA"/>
</dbReference>
<dbReference type="PIR" id="A64001">
    <property type="entry name" value="A64001"/>
</dbReference>
<dbReference type="SMR" id="P43938"/>
<dbReference type="STRING" id="71421.HI_0083"/>
<dbReference type="EnsemblBacteria" id="AAC21762">
    <property type="protein sequence ID" value="AAC21762"/>
    <property type="gene ID" value="HI_0083"/>
</dbReference>
<dbReference type="KEGG" id="hin:HI_0083"/>
<dbReference type="HOGENOM" id="CLU_2734394_0_0_6"/>
<dbReference type="Proteomes" id="UP000000579">
    <property type="component" value="Chromosome"/>
</dbReference>
<protein>
    <recommendedName>
        <fullName>Uncharacterized protein HI_0083</fullName>
    </recommendedName>
</protein>